<reference key="1">
    <citation type="submission" date="2004-05" db="EMBL/GenBank/DDBJ databases">
        <authorList>
            <person name="Hajjaj A."/>
            <person name="Chain P.S.G."/>
            <person name="Smith K.L."/>
            <person name="Imbro P.M."/>
            <person name="Malfatti S.A."/>
        </authorList>
    </citation>
    <scope>NUCLEOTIDE SEQUENCE [GENOMIC RNA]</scope>
</reference>
<reference key="2">
    <citation type="submission" date="2004-05" db="EMBL/GenBank/DDBJ databases">
        <authorList>
            <person name="Jahrling P.B."/>
            <person name="Geisbert J."/>
            <person name="Ibrahim M.S."/>
        </authorList>
    </citation>
    <scope>NUCLEOTIDE SEQUENCE [GENOMIC RNA]</scope>
</reference>
<reference key="3">
    <citation type="submission" date="2005-02" db="EMBL/GenBank/DDBJ databases">
        <title>Genetic diversity of Machupo virus (family Arenaviridae): implications for synthetic antibody therapy for Bolivian hemorrhagic fever.</title>
        <authorList>
            <person name="Milazzo M.L."/>
            <person name="Cajimat M.N.B."/>
            <person name="Rollin P.E."/>
            <person name="Dodsley N.A."/>
            <person name="Nichol S.T."/>
            <person name="Bowen M.D."/>
            <person name="Ksiazek T.G."/>
            <person name="Fulhorst C.F."/>
        </authorList>
    </citation>
    <scope>NUCLEOTIDE SEQUENCE [GENOMIC RNA]</scope>
</reference>
<reference key="4">
    <citation type="journal article" date="2007" name="Nature">
        <title>Transferrin receptor 1 is a cellular receptor for New World haemorrhagic fever arenaviruses.</title>
        <authorList>
            <person name="Radoshitzky S.R."/>
            <person name="Abraham J."/>
            <person name="Spiropoulou C.F."/>
            <person name="Kuhn J.H."/>
            <person name="Nguyen D."/>
            <person name="Li W."/>
            <person name="Nagel J."/>
            <person name="Schmidt P.J."/>
            <person name="Nunberg J.H."/>
            <person name="Andrews N.C."/>
            <person name="Farzan M."/>
            <person name="Choe H."/>
        </authorList>
    </citation>
    <scope>FUNCTION</scope>
    <scope>INTERACTION WITH HOST TFRC</scope>
</reference>
<organism>
    <name type="scientific">Machupo virus</name>
    <name type="common">MACV</name>
    <dbReference type="NCBI Taxonomy" id="3052317"/>
    <lineage>
        <taxon>Viruses</taxon>
        <taxon>Riboviria</taxon>
        <taxon>Orthornavirae</taxon>
        <taxon>Negarnaviricota</taxon>
        <taxon>Polyploviricotina</taxon>
        <taxon>Ellioviricetes</taxon>
        <taxon>Bunyavirales</taxon>
        <taxon>Arenaviridae</taxon>
        <taxon>Mammarenavirus</taxon>
    </lineage>
</organism>
<proteinExistence type="evidence at protein level"/>
<gene>
    <name evidence="2" type="primary">GPC</name>
    <name type="synonym">GP-C</name>
</gene>
<sequence>MGQLISFFQEIPVFLQEALNIALVAVSLIAVIKGIINLYKSGLFQFIFFLLLAGRSCSDGTFKIGLHTEFQSVTLTMQRLLANHSNELPSLCMLNNSFYYMKGGVNTFLIRVSDISVLMKEHDVSIYEPEDLGNCLNKSDSSWAIHWFSNALGHDWLMDPPMLCRNKTKKEGSNIQFNISKADDVRVYGKKIRNGMRHLFRGFHDPCEEGKKCYLTINQCGDPSSFDYCGMDHLSKCQFDHVNTLHFLVRSKTHLNFERSLKAFFSWSLTDSSGKDMPGGYCLEEWMLIAAKMKCFGNTAVAKCNQNHDSEFCDMLRLFDYNKNAIKTLNDESKKEINLLSQTVNALISDNLLMKNKIKELMSIPYCNYTKFWYVNHTLTGQHTLPRCWLIRNGSYLNTSEFRNDWILESDHLISEMLSKEYAERQGKTPITLVDICFWSTVFFTASLFLHLVGIPTHRHLKGEACPLPHKLDSFGGCRCGKYPRLRKPTIWHKRH</sequence>
<name>GLYC_MACHU</name>
<evidence type="ECO:0000250" key="1">
    <source>
        <dbReference type="UniProtKB" id="P26313"/>
    </source>
</evidence>
<evidence type="ECO:0000255" key="2">
    <source>
        <dbReference type="HAMAP-Rule" id="MF_04084"/>
    </source>
</evidence>
<evidence type="ECO:0000269" key="3">
    <source>
    </source>
</evidence>
<comment type="function">
    <molecule>Glycoprotein G2</molecule>
    <text evidence="2">Class I viral fusion protein that directs fusion of viral and host endosomal membranes, leading to delivery of the nucleocapsid into the cytoplasm. Membrane fusion is mediated by irreversible conformational changes induced upon acidification in the endosome.</text>
</comment>
<comment type="function">
    <text evidence="2">Stable signal peptide (SSP): cleaved and functions as a signal peptide. In addition, it is also retained as the third component of the GP complex. The SSP is required for efficient glycoprotein expression, post-translational maturation cleavage of GP1 and GP2, glycoprotein transport to the cell surface plasma membrane, formation of infectious virus particles, and acid pH-dependent glycoprotein-mediated cell fusion.</text>
</comment>
<comment type="function">
    <molecule>Glycoprotein G1</molecule>
    <text evidence="2 3">Interacts with the host receptor (By similarity). Mediates virus attachment to host TFRC. This attachment induces virion internalization predominantly through clathrin-mediated endocytosis (PubMed:17287727).</text>
</comment>
<comment type="subunit">
    <molecule>Glycoprotein G1</molecule>
    <text evidence="2 3">Homotetramer; disulfide-linked (By similarity). Interacts with host TFRC (PubMed:17287727).</text>
</comment>
<comment type="subunit">
    <molecule>Glycoprotein G2</molecule>
    <text evidence="2">Homotetramer. GP2 homotetramers bind through ionic interactions with GP1 homotetramers to form the GP complex together with the stable signal peptide. The GP-C polyprotein interacts with the host protease MBTPS1/SKI-1 resulting in the polyprotein processing.</text>
</comment>
<comment type="subcellular location">
    <molecule>Glycoprotein G1</molecule>
    <subcellularLocation>
        <location evidence="2">Virion membrane</location>
        <topology evidence="2">Peripheral membrane protein</topology>
    </subcellularLocation>
    <subcellularLocation>
        <location evidence="2">Host endoplasmic reticulum membrane</location>
        <topology evidence="2">Peripheral membrane protein</topology>
    </subcellularLocation>
    <subcellularLocation>
        <location evidence="2">Host Golgi apparatus membrane</location>
        <topology evidence="2">Peripheral membrane protein</topology>
    </subcellularLocation>
    <subcellularLocation>
        <location evidence="2">Host cell membrane</location>
        <topology evidence="2">Peripheral membrane protein</topology>
    </subcellularLocation>
</comment>
<comment type="subcellular location">
    <molecule>Glycoprotein G2</molecule>
    <subcellularLocation>
        <location evidence="2">Virion membrane</location>
        <topology evidence="2">Single-pass membrane protein</topology>
    </subcellularLocation>
    <subcellularLocation>
        <location evidence="2">Host endoplasmic reticulum membrane</location>
        <topology evidence="2">Single-pass membrane protein</topology>
    </subcellularLocation>
    <subcellularLocation>
        <location evidence="2">Host Golgi apparatus membrane</location>
        <topology evidence="2">Single-pass membrane protein</topology>
    </subcellularLocation>
    <subcellularLocation>
        <location evidence="2">Host cell membrane</location>
        <topology evidence="2">Single-pass membrane protein</topology>
    </subcellularLocation>
    <text evidence="2">Binding to the stable signal peptide masks endogenous ER localization signals in the cytoplasmic domain of G2 to ensure that only the fully assembled, tripartite GP complex is transported for virion assembly.</text>
</comment>
<comment type="subcellular location">
    <molecule>Stable signal peptide</molecule>
    <subcellularLocation>
        <location evidence="2">Virion membrane</location>
        <topology evidence="2">Multi-pass membrane protein</topology>
    </subcellularLocation>
    <subcellularLocation>
        <location evidence="2">Host endoplasmic reticulum membrane</location>
        <topology evidence="2">Multi-pass membrane protein</topology>
    </subcellularLocation>
    <subcellularLocation>
        <location evidence="2">Host Golgi apparatus membrane</location>
        <topology evidence="2">Multi-pass membrane protein</topology>
    </subcellularLocation>
    <subcellularLocation>
        <location evidence="2">Host cell membrane</location>
        <topology evidence="2">Multi-pass membrane protein</topology>
    </subcellularLocation>
</comment>
<comment type="domain">
    <text evidence="2">The cytoplasmic domain of GP2 plays a role in ER location. It also contains a zinc-binding domain that allows SSP retention in the GPC complex by accepting a cysteine from SSP as the fourth ligand.</text>
</comment>
<comment type="PTM">
    <molecule>Pre-glycoprotein polyprotein GP complex</molecule>
    <text evidence="2">Specific enzymatic cleavages in vivo yield mature proteins. GP-C polyprotein is cleaved in the endoplasmic reticulum by the host protease MBTPS1. Only cleaved glycoprotein is incorporated into virions.</text>
</comment>
<comment type="PTM">
    <molecule>Stable signal peptide</molecule>
    <text evidence="2">The SSP remains stably associated with the GP complex following cleavage by signal peptidase and plays crucial roles in the trafficking of GP through the secretory pathway.</text>
</comment>
<comment type="PTM">
    <molecule>Stable signal peptide</molecule>
    <text evidence="2">Myristoylation is necessary for GP2-mediated fusion activity.</text>
</comment>
<comment type="similarity">
    <text evidence="2">Belongs to the arenaviridae GPC protein family.</text>
</comment>
<keyword id="KW-1015">Disulfide bond</keyword>
<keyword id="KW-1170">Fusion of virus membrane with host endosomal membrane</keyword>
<keyword id="KW-1168">Fusion of virus membrane with host membrane</keyword>
<keyword id="KW-0325">Glycoprotein</keyword>
<keyword id="KW-1032">Host cell membrane</keyword>
<keyword id="KW-1038">Host endoplasmic reticulum</keyword>
<keyword id="KW-1040">Host Golgi apparatus</keyword>
<keyword id="KW-1043">Host membrane</keyword>
<keyword id="KW-0945">Host-virus interaction</keyword>
<keyword id="KW-0449">Lipoprotein</keyword>
<keyword id="KW-0472">Membrane</keyword>
<keyword id="KW-0479">Metal-binding</keyword>
<keyword id="KW-0519">Myristate</keyword>
<keyword id="KW-0812">Transmembrane</keyword>
<keyword id="KW-1133">Transmembrane helix</keyword>
<keyword id="KW-1161">Viral attachment to host cell</keyword>
<keyword id="KW-0261">Viral envelope protein</keyword>
<keyword id="KW-1162">Viral penetration into host cytoplasm</keyword>
<keyword id="KW-0946">Virion</keyword>
<keyword id="KW-1164">Virus endocytosis by host</keyword>
<keyword id="KW-1160">Virus entry into host cell</keyword>
<keyword id="KW-0862">Zinc</keyword>
<dbReference type="EMBL" id="AY624355">
    <property type="protein sequence ID" value="AAT45081.1"/>
    <property type="molecule type" value="Genomic_RNA"/>
</dbReference>
<dbReference type="EMBL" id="AY924202">
    <property type="protein sequence ID" value="AAX99327.1"/>
    <property type="molecule type" value="Genomic_RNA"/>
</dbReference>
<dbReference type="SMR" id="Q6IUF7"/>
<dbReference type="GlyCosmos" id="Q6IUF7">
    <property type="glycosylation" value="9 sites, No reported glycans"/>
</dbReference>
<dbReference type="Proteomes" id="UP000009263">
    <property type="component" value="Genome"/>
</dbReference>
<dbReference type="GO" id="GO:0044167">
    <property type="term" value="C:host cell endoplasmic reticulum membrane"/>
    <property type="evidence" value="ECO:0007669"/>
    <property type="project" value="UniProtKB-SubCell"/>
</dbReference>
<dbReference type="GO" id="GO:0044178">
    <property type="term" value="C:host cell Golgi membrane"/>
    <property type="evidence" value="ECO:0007669"/>
    <property type="project" value="UniProtKB-SubCell"/>
</dbReference>
<dbReference type="GO" id="GO:0020002">
    <property type="term" value="C:host cell plasma membrane"/>
    <property type="evidence" value="ECO:0007669"/>
    <property type="project" value="UniProtKB-SubCell"/>
</dbReference>
<dbReference type="GO" id="GO:0016020">
    <property type="term" value="C:membrane"/>
    <property type="evidence" value="ECO:0007669"/>
    <property type="project" value="UniProtKB-UniRule"/>
</dbReference>
<dbReference type="GO" id="GO:0019031">
    <property type="term" value="C:viral envelope"/>
    <property type="evidence" value="ECO:0007669"/>
    <property type="project" value="UniProtKB-UniRule"/>
</dbReference>
<dbReference type="GO" id="GO:0055036">
    <property type="term" value="C:virion membrane"/>
    <property type="evidence" value="ECO:0007669"/>
    <property type="project" value="UniProtKB-SubCell"/>
</dbReference>
<dbReference type="GO" id="GO:0046872">
    <property type="term" value="F:metal ion binding"/>
    <property type="evidence" value="ECO:0007669"/>
    <property type="project" value="UniProtKB-KW"/>
</dbReference>
<dbReference type="GO" id="GO:0039654">
    <property type="term" value="P:fusion of virus membrane with host endosome membrane"/>
    <property type="evidence" value="ECO:0007669"/>
    <property type="project" value="UniProtKB-UniRule"/>
</dbReference>
<dbReference type="GO" id="GO:0019065">
    <property type="term" value="P:receptor-mediated endocytosis of virus by host cell"/>
    <property type="evidence" value="ECO:0007669"/>
    <property type="project" value="UniProtKB-UniRule"/>
</dbReference>
<dbReference type="GO" id="GO:0019062">
    <property type="term" value="P:virion attachment to host cell"/>
    <property type="evidence" value="ECO:0007669"/>
    <property type="project" value="UniProtKB-UniRule"/>
</dbReference>
<dbReference type="Gene3D" id="6.10.140.1590">
    <property type="match status" value="1"/>
</dbReference>
<dbReference type="Gene3D" id="2.20.28.180">
    <property type="entry name" value="Arenavirus glycoprotein, zinc binding domain"/>
    <property type="match status" value="1"/>
</dbReference>
<dbReference type="HAMAP" id="MF_04084">
    <property type="entry name" value="ARENA_GPC"/>
    <property type="match status" value="1"/>
</dbReference>
<dbReference type="InterPro" id="IPR001535">
    <property type="entry name" value="Arena_glycoprot"/>
</dbReference>
<dbReference type="InterPro" id="IPR043015">
    <property type="entry name" value="Arena_glycoprot_zinc-bd"/>
</dbReference>
<dbReference type="Pfam" id="PF00798">
    <property type="entry name" value="Arena_glycoprot"/>
    <property type="match status" value="2"/>
</dbReference>
<dbReference type="PIRSF" id="PIRSF004028">
    <property type="entry name" value="GPC_ArenaV"/>
    <property type="match status" value="1"/>
</dbReference>
<feature type="initiator methionine" description="Removed; by host" evidence="2">
    <location>
        <position position="1"/>
    </location>
</feature>
<feature type="chain" id="PRO_0000361600" description="Pre-glycoprotein polyprotein GP complex" evidence="2">
    <location>
        <begin position="2"/>
        <end position="496"/>
    </location>
</feature>
<feature type="chain" id="PRO_0000361601" description="Stable signal peptide" evidence="2">
    <location>
        <begin position="2"/>
        <end position="58"/>
    </location>
</feature>
<feature type="chain" id="PRO_0000361602" description="Glycoprotein G1" evidence="2">
    <location>
        <begin position="59"/>
        <end position="262"/>
    </location>
</feature>
<feature type="chain" id="PRO_0000361603" description="Glycoprotein G2" evidence="2">
    <location>
        <begin position="263"/>
        <end position="496"/>
    </location>
</feature>
<feature type="topological domain" description="Extracellular" evidence="2">
    <location>
        <begin position="2"/>
        <end position="17"/>
    </location>
</feature>
<feature type="transmembrane region" description="Helical" evidence="2">
    <location>
        <begin position="18"/>
        <end position="32"/>
    </location>
</feature>
<feature type="topological domain" description="Cytoplasmic" evidence="2">
    <location>
        <position position="33"/>
    </location>
</feature>
<feature type="transmembrane region" description="Helical" evidence="2">
    <location>
        <begin position="34"/>
        <end position="53"/>
    </location>
</feature>
<feature type="topological domain" description="Extracellular" evidence="2">
    <location>
        <begin position="54"/>
        <end position="58"/>
    </location>
</feature>
<feature type="topological domain" description="Extracellular" evidence="2">
    <location>
        <begin position="59"/>
        <end position="435"/>
    </location>
</feature>
<feature type="transmembrane region" description="Helical" evidence="2">
    <location>
        <begin position="436"/>
        <end position="456"/>
    </location>
</feature>
<feature type="topological domain" description="Cytoplasmic" evidence="2">
    <location>
        <begin position="457"/>
        <end position="496"/>
    </location>
</feature>
<feature type="binding site" evidence="2">
    <location>
        <position position="57"/>
    </location>
    <ligand>
        <name>Zn(2+)</name>
        <dbReference type="ChEBI" id="CHEBI:29105"/>
        <label>1</label>
    </ligand>
</feature>
<feature type="binding site" evidence="2">
    <location>
        <position position="458"/>
    </location>
    <ligand>
        <name>Zn(2+)</name>
        <dbReference type="ChEBI" id="CHEBI:29105"/>
        <label>2</label>
    </ligand>
</feature>
<feature type="binding site" evidence="2">
    <location>
        <position position="460"/>
    </location>
    <ligand>
        <name>Zn(2+)</name>
        <dbReference type="ChEBI" id="CHEBI:29105"/>
        <label>2</label>
    </ligand>
</feature>
<feature type="binding site" evidence="2">
    <location>
        <position position="466"/>
    </location>
    <ligand>
        <name>Zn(2+)</name>
        <dbReference type="ChEBI" id="CHEBI:29105"/>
        <label>2</label>
    </ligand>
</feature>
<feature type="binding site" evidence="2">
    <location>
        <position position="470"/>
    </location>
    <ligand>
        <name>Zn(2+)</name>
        <dbReference type="ChEBI" id="CHEBI:29105"/>
        <label>1</label>
    </ligand>
</feature>
<feature type="binding site" evidence="2">
    <location>
        <position position="478"/>
    </location>
    <ligand>
        <name>Zn(2+)</name>
        <dbReference type="ChEBI" id="CHEBI:29105"/>
        <label>1</label>
    </ligand>
</feature>
<feature type="binding site" evidence="2">
    <location>
        <position position="480"/>
    </location>
    <ligand>
        <name>Zn(2+)</name>
        <dbReference type="ChEBI" id="CHEBI:29105"/>
        <label>1</label>
    </ligand>
</feature>
<feature type="binding site" evidence="2">
    <location>
        <position position="496"/>
    </location>
    <ligand>
        <name>Zn(2+)</name>
        <dbReference type="ChEBI" id="CHEBI:29105"/>
        <label>2</label>
    </ligand>
</feature>
<feature type="site" description="Important for GP-C-mediated membrane fusion" evidence="1">
    <location>
        <position position="33"/>
    </location>
</feature>
<feature type="site" description="Cleavage; by host signal peptidase" evidence="2">
    <location>
        <begin position="58"/>
        <end position="59"/>
    </location>
</feature>
<feature type="site" description="Cleavage; by host MBTPS1" evidence="2">
    <location>
        <begin position="262"/>
        <end position="263"/>
    </location>
</feature>
<feature type="lipid moiety-binding region" description="N-myristoyl glycine; by host" evidence="2">
    <location>
        <position position="2"/>
    </location>
</feature>
<feature type="glycosylation site" description="N-linked (GlcNAc...) asparagine; by host" evidence="2">
    <location>
        <position position="83"/>
    </location>
</feature>
<feature type="glycosylation site" description="N-linked (GlcNAc...) asparagine; by host" evidence="2">
    <location>
        <position position="95"/>
    </location>
</feature>
<feature type="glycosylation site" description="N-linked (GlcNAc...) asparagine; by host" evidence="2">
    <location>
        <position position="137"/>
    </location>
</feature>
<feature type="glycosylation site" description="N-linked (GlcNAc...) asparagine; by host" evidence="2">
    <location>
        <position position="166"/>
    </location>
</feature>
<feature type="glycosylation site" description="N-linked (GlcNAc...) asparagine; by host" evidence="2">
    <location>
        <position position="178"/>
    </location>
</feature>
<feature type="glycosylation site" description="N-linked (GlcNAc...) asparagine; by host" evidence="2">
    <location>
        <position position="368"/>
    </location>
</feature>
<feature type="glycosylation site" description="N-linked (GlcNAc...) asparagine; by host" evidence="2">
    <location>
        <position position="376"/>
    </location>
</feature>
<feature type="glycosylation site" description="N-linked (GlcNAc...) asparagine; by host" evidence="2">
    <location>
        <position position="393"/>
    </location>
</feature>
<feature type="glycosylation site" description="N-linked (GlcNAc...) asparagine; by host" evidence="2">
    <location>
        <position position="398"/>
    </location>
</feature>
<feature type="disulfide bond" evidence="2">
    <location>
        <begin position="92"/>
        <end position="237"/>
    </location>
</feature>
<feature type="disulfide bond" evidence="2">
    <location>
        <begin position="135"/>
        <end position="164"/>
    </location>
</feature>
<feature type="disulfide bond" evidence="2">
    <location>
        <begin position="207"/>
        <end position="213"/>
    </location>
</feature>
<feature type="disulfide bond" evidence="2">
    <location>
        <begin position="282"/>
        <end position="295"/>
    </location>
</feature>
<feature type="disulfide bond" evidence="2">
    <location>
        <begin position="304"/>
        <end position="313"/>
    </location>
</feature>
<feature type="disulfide bond" evidence="2">
    <location>
        <begin position="367"/>
        <end position="388"/>
    </location>
</feature>
<accession>Q6IUF7</accession>
<organismHost>
    <name type="scientific">Calomys callosus</name>
    <name type="common">Large vesper mouse</name>
    <dbReference type="NCBI Taxonomy" id="56210"/>
</organismHost>
<organismHost>
    <name type="scientific">Chlorocebus aethiops</name>
    <name type="common">Green monkey</name>
    <name type="synonym">Cercopithecus aethiops</name>
    <dbReference type="NCBI Taxonomy" id="9534"/>
</organismHost>
<organismHost>
    <name type="scientific">Homo sapiens</name>
    <name type="common">Human</name>
    <dbReference type="NCBI Taxonomy" id="9606"/>
</organismHost>
<protein>
    <recommendedName>
        <fullName evidence="2">Pre-glycoprotein polyprotein GP complex</fullName>
        <shortName evidence="2">Pre-GP-C</shortName>
    </recommendedName>
    <component>
        <recommendedName>
            <fullName evidence="2">Stable signal peptide</fullName>
            <shortName evidence="2">SSP</shortName>
        </recommendedName>
    </component>
    <component>
        <recommendedName>
            <fullName evidence="2">Glycoprotein G1</fullName>
            <shortName evidence="2">GP1</shortName>
        </recommendedName>
    </component>
    <component>
        <recommendedName>
            <fullName evidence="2">Glycoprotein G2</fullName>
            <shortName evidence="2">GP2</shortName>
        </recommendedName>
    </component>
</protein>